<reference key="1">
    <citation type="journal article" date="2004" name="Nature">
        <title>Genome evolution in yeasts.</title>
        <authorList>
            <person name="Dujon B."/>
            <person name="Sherman D."/>
            <person name="Fischer G."/>
            <person name="Durrens P."/>
            <person name="Casaregola S."/>
            <person name="Lafontaine I."/>
            <person name="de Montigny J."/>
            <person name="Marck C."/>
            <person name="Neuveglise C."/>
            <person name="Talla E."/>
            <person name="Goffard N."/>
            <person name="Frangeul L."/>
            <person name="Aigle M."/>
            <person name="Anthouard V."/>
            <person name="Babour A."/>
            <person name="Barbe V."/>
            <person name="Barnay S."/>
            <person name="Blanchin S."/>
            <person name="Beckerich J.-M."/>
            <person name="Beyne E."/>
            <person name="Bleykasten C."/>
            <person name="Boisrame A."/>
            <person name="Boyer J."/>
            <person name="Cattolico L."/>
            <person name="Confanioleri F."/>
            <person name="de Daruvar A."/>
            <person name="Despons L."/>
            <person name="Fabre E."/>
            <person name="Fairhead C."/>
            <person name="Ferry-Dumazet H."/>
            <person name="Groppi A."/>
            <person name="Hantraye F."/>
            <person name="Hennequin C."/>
            <person name="Jauniaux N."/>
            <person name="Joyet P."/>
            <person name="Kachouri R."/>
            <person name="Kerrest A."/>
            <person name="Koszul R."/>
            <person name="Lemaire M."/>
            <person name="Lesur I."/>
            <person name="Ma L."/>
            <person name="Muller H."/>
            <person name="Nicaud J.-M."/>
            <person name="Nikolski M."/>
            <person name="Oztas S."/>
            <person name="Ozier-Kalogeropoulos O."/>
            <person name="Pellenz S."/>
            <person name="Potier S."/>
            <person name="Richard G.-F."/>
            <person name="Straub M.-L."/>
            <person name="Suleau A."/>
            <person name="Swennen D."/>
            <person name="Tekaia F."/>
            <person name="Wesolowski-Louvel M."/>
            <person name="Westhof E."/>
            <person name="Wirth B."/>
            <person name="Zeniou-Meyer M."/>
            <person name="Zivanovic Y."/>
            <person name="Bolotin-Fukuhara M."/>
            <person name="Thierry A."/>
            <person name="Bouchier C."/>
            <person name="Caudron B."/>
            <person name="Scarpelli C."/>
            <person name="Gaillardin C."/>
            <person name="Weissenbach J."/>
            <person name="Wincker P."/>
            <person name="Souciet J.-L."/>
        </authorList>
    </citation>
    <scope>NUCLEOTIDE SEQUENCE [LARGE SCALE GENOMIC DNA]</scope>
    <source>
        <strain>CLIB 122 / E 150</strain>
    </source>
</reference>
<reference key="2">
    <citation type="journal article" date="2013" name="Biomolecules">
        <title>Enantiocomplementary Yarrowia lipolytica oxidoreductases: Alcohol dehydrogenase 2 and short chain dehydrogenase/reductase.</title>
        <authorList>
            <person name="Napora-Wijata K."/>
            <person name="Strohmeier G.A."/>
            <person name="Sonavane M.N."/>
            <person name="Avi M."/>
            <person name="Robins K."/>
            <person name="Winkler M."/>
        </authorList>
    </citation>
    <scope>FUNCTION</scope>
    <source>
        <strain>CLIB 122 / E 150</strain>
    </source>
</reference>
<reference key="3">
    <citation type="journal article" date="2013" name="Bioorg. Med. Chem. Lett.">
        <title>Yarrowia lipolytica dehydrogenase/reductase: an enzyme tolerant for lipophilic compounds and carbohydrate substrates.</title>
        <authorList>
            <person name="Napora K."/>
            <person name="Wrodnigg T.M."/>
            <person name="Kosmus P."/>
            <person name="Thonhofer M."/>
            <person name="Robins K."/>
            <person name="Winkler M."/>
        </authorList>
    </citation>
    <scope>FUNCTION</scope>
    <scope>CATALYTIC ACTIVITY</scope>
    <scope>BIOPHYSICOCHEMICAL PROPERTIES</scope>
    <source>
        <strain>CLIB 122 / E 150</strain>
    </source>
</reference>
<feature type="chain" id="PRO_0000425282" description="Probable NADP-dependent mannitol dehydrogenase">
    <location>
        <begin position="1"/>
        <end position="278"/>
    </location>
</feature>
<feature type="active site" description="Proton donor" evidence="2">
    <location>
        <position position="171"/>
    </location>
</feature>
<feature type="active site" description="Proton donor" evidence="2">
    <location>
        <position position="186"/>
    </location>
</feature>
<feature type="active site" description="Lowers pKa of active site Tyr" evidence="2">
    <location>
        <position position="190"/>
    </location>
</feature>
<feature type="binding site" evidence="1">
    <location>
        <position position="45"/>
    </location>
    <ligand>
        <name>NADP(+)</name>
        <dbReference type="ChEBI" id="CHEBI:58349"/>
    </ligand>
</feature>
<feature type="binding site" evidence="2">
    <location>
        <position position="117"/>
    </location>
    <ligand>
        <name>NADP(+)</name>
        <dbReference type="ChEBI" id="CHEBI:58349"/>
    </ligand>
</feature>
<feature type="binding site" evidence="1">
    <location>
        <position position="152"/>
    </location>
    <ligand>
        <name>NADP(+)</name>
        <dbReference type="ChEBI" id="CHEBI:58349"/>
    </ligand>
</feature>
<feature type="binding site" evidence="2">
    <location>
        <position position="186"/>
    </location>
    <ligand>
        <name>NADP(+)</name>
        <dbReference type="ChEBI" id="CHEBI:58349"/>
    </ligand>
</feature>
<feature type="binding site" evidence="2">
    <location>
        <position position="190"/>
    </location>
    <ligand>
        <name>NADP(+)</name>
        <dbReference type="ChEBI" id="CHEBI:58349"/>
    </ligand>
</feature>
<feature type="binding site" evidence="1">
    <location>
        <position position="220"/>
    </location>
    <ligand>
        <name>NADP(+)</name>
        <dbReference type="ChEBI" id="CHEBI:58349"/>
    </ligand>
</feature>
<accession>Q6CEE9</accession>
<organism>
    <name type="scientific">Yarrowia lipolytica (strain CLIB 122 / E 150)</name>
    <name type="common">Yeast</name>
    <name type="synonym">Candida lipolytica</name>
    <dbReference type="NCBI Taxonomy" id="284591"/>
    <lineage>
        <taxon>Eukaryota</taxon>
        <taxon>Fungi</taxon>
        <taxon>Dikarya</taxon>
        <taxon>Ascomycota</taxon>
        <taxon>Saccharomycotina</taxon>
        <taxon>Dipodascomycetes</taxon>
        <taxon>Dipodascales</taxon>
        <taxon>Dipodascales incertae sedis</taxon>
        <taxon>Yarrowia</taxon>
    </lineage>
</organism>
<protein>
    <recommendedName>
        <fullName>Probable NADP-dependent mannitol dehydrogenase</fullName>
        <shortName>MtDH</shortName>
        <ecNumber evidence="3">1.1.1.138</ecNumber>
    </recommendedName>
    <alternativeName>
        <fullName>Mannitol 2-dehydrogenase [NADP(+)]</fullName>
    </alternativeName>
    <alternativeName>
        <fullName>Short chain dehydrogenase/reductase</fullName>
        <shortName>YlSDR</shortName>
    </alternativeName>
</protein>
<sequence length="278" mass="30033">MPAPATYATGLTPLPTPVPKVSKNIMERFSLKGKVASITGSSSGIGFAVAEAFAQAGADVAIWYNSKPSDEKAEYLSKTYGVRSKAYKCAVTNAKQVETTIQTIEKDFGKIDIFIANAGIPWTAGPMIDVPNNEEWDKVVDLDLNGAYYCAKYAGQIFKKQGYGSFIFTASMSGHIVNIPQMQACYNAAKCAVLHLSRSLAVEWAGFARCNTVSPGYMATEISDFIPRDTKEKWWQLIPMGREGDPSELAGAYIYLASDASTYTTGADILVDGGYCCP</sequence>
<evidence type="ECO:0000250" key="1">
    <source>
        <dbReference type="UniProtKB" id="L0E2Z4"/>
    </source>
</evidence>
<evidence type="ECO:0000250" key="2">
    <source>
        <dbReference type="UniProtKB" id="O93868"/>
    </source>
</evidence>
<evidence type="ECO:0000269" key="3">
    <source>
    </source>
</evidence>
<evidence type="ECO:0000269" key="4">
    <source ref="2"/>
</evidence>
<evidence type="ECO:0000305" key="5"/>
<dbReference type="EC" id="1.1.1.138" evidence="3"/>
<dbReference type="EMBL" id="CR382128">
    <property type="protein sequence ID" value="CAG83216.1"/>
    <property type="molecule type" value="Genomic_DNA"/>
</dbReference>
<dbReference type="RefSeq" id="XP_500963.1">
    <property type="nucleotide sequence ID" value="XM_500963.1"/>
</dbReference>
<dbReference type="SMR" id="Q6CEE9"/>
<dbReference type="STRING" id="284591.Q6CEE9"/>
<dbReference type="EnsemblFungi" id="CAG83216">
    <property type="protein sequence ID" value="CAG83216"/>
    <property type="gene ID" value="YALI0_B16192g"/>
</dbReference>
<dbReference type="KEGG" id="yli:2906628"/>
<dbReference type="VEuPathDB" id="FungiDB:YALI0_B16192g"/>
<dbReference type="HOGENOM" id="CLU_010194_1_1_1"/>
<dbReference type="InParanoid" id="Q6CEE9"/>
<dbReference type="OMA" id="DETKDIW"/>
<dbReference type="OrthoDB" id="118280at4891"/>
<dbReference type="Proteomes" id="UP000001300">
    <property type="component" value="Chromosome B"/>
</dbReference>
<dbReference type="GO" id="GO:0050085">
    <property type="term" value="F:mannitol 2-dehydrogenase (NADP+) activity"/>
    <property type="evidence" value="ECO:0000314"/>
    <property type="project" value="UniProtKB"/>
</dbReference>
<dbReference type="GO" id="GO:0050661">
    <property type="term" value="F:NADP binding"/>
    <property type="evidence" value="ECO:0000250"/>
    <property type="project" value="UniProtKB"/>
</dbReference>
<dbReference type="GO" id="GO:0050664">
    <property type="term" value="F:oxidoreductase activity, acting on NAD(P)H, oxygen as acceptor"/>
    <property type="evidence" value="ECO:0000318"/>
    <property type="project" value="GO_Central"/>
</dbReference>
<dbReference type="GO" id="GO:0019594">
    <property type="term" value="P:mannitol metabolic process"/>
    <property type="evidence" value="ECO:0000314"/>
    <property type="project" value="UniProtKB"/>
</dbReference>
<dbReference type="GO" id="GO:0051289">
    <property type="term" value="P:protein homotetramerization"/>
    <property type="evidence" value="ECO:0000250"/>
    <property type="project" value="UniProtKB"/>
</dbReference>
<dbReference type="CDD" id="cd05352">
    <property type="entry name" value="MDH-like_SDR_c"/>
    <property type="match status" value="1"/>
</dbReference>
<dbReference type="FunFam" id="3.40.50.720:FF:000090">
    <property type="entry name" value="NADP-dependent mannitol dehydrogenase"/>
    <property type="match status" value="1"/>
</dbReference>
<dbReference type="Gene3D" id="3.40.50.720">
    <property type="entry name" value="NAD(P)-binding Rossmann-like Domain"/>
    <property type="match status" value="1"/>
</dbReference>
<dbReference type="InterPro" id="IPR036291">
    <property type="entry name" value="NAD(P)-bd_dom_sf"/>
</dbReference>
<dbReference type="InterPro" id="IPR002347">
    <property type="entry name" value="SDR_fam"/>
</dbReference>
<dbReference type="PANTHER" id="PTHR43008">
    <property type="entry name" value="BENZIL REDUCTASE"/>
    <property type="match status" value="1"/>
</dbReference>
<dbReference type="PANTHER" id="PTHR43008:SF13">
    <property type="entry name" value="L-XYLULOSE REDUCTASE-RELATED"/>
    <property type="match status" value="1"/>
</dbReference>
<dbReference type="Pfam" id="PF13561">
    <property type="entry name" value="adh_short_C2"/>
    <property type="match status" value="1"/>
</dbReference>
<dbReference type="PRINTS" id="PR00081">
    <property type="entry name" value="GDHRDH"/>
</dbReference>
<dbReference type="PRINTS" id="PR00080">
    <property type="entry name" value="SDRFAMILY"/>
</dbReference>
<dbReference type="SUPFAM" id="SSF51735">
    <property type="entry name" value="NAD(P)-binding Rossmann-fold domains"/>
    <property type="match status" value="1"/>
</dbReference>
<keyword id="KW-0521">NADP</keyword>
<keyword id="KW-0560">Oxidoreductase</keyword>
<keyword id="KW-1185">Reference proteome</keyword>
<comment type="function">
    <text evidence="3 4">Versatile oxidoreductase that catalyzes the oxidation and reduction of polar as well as non-polar substrates at a very broad pH range. Preferentially oxidizes secondary alcohols. Has highest activity for racemic 2-heptanol and racemic octanol. Is also an efficient reductase for selected substrates. Substrate selectivity was found for medium chain length ketones with the carbonyl function at position C-2. Has highest activities for ribulose and fructose. The enzyme is (R)-selective in the reduction direction and produces exclusively the (R)-enantiomer.</text>
</comment>
<comment type="catalytic activity">
    <reaction evidence="3">
        <text>D-mannitol + NADP(+) = D-fructose + NADPH + H(+)</text>
        <dbReference type="Rhea" id="RHEA:16765"/>
        <dbReference type="ChEBI" id="CHEBI:15378"/>
        <dbReference type="ChEBI" id="CHEBI:16899"/>
        <dbReference type="ChEBI" id="CHEBI:37721"/>
        <dbReference type="ChEBI" id="CHEBI:57783"/>
        <dbReference type="ChEBI" id="CHEBI:58349"/>
        <dbReference type="EC" id="1.1.1.138"/>
    </reaction>
</comment>
<comment type="biophysicochemical properties">
    <kinetics>
        <KM evidence="3">4.91 mM for rac-2-heptanol</KM>
        <KM evidence="3">8.8 mM for ribulose</KM>
        <KM evidence="3">0.793 mM for NADP(+)</KM>
        <text>kcat is 3.17 sec(-1) with rac-2-heptanol as substrate and 6.15 sec(-1) for NADP(+). kcat is 5.42 sec(-1) for ribulose.</text>
    </kinetics>
    <phDependence>
        <text evidence="3">Optimum pH is 10 for the oxidation reaction, and 4-9 for the reduction reaction.</text>
    </phDependence>
    <temperatureDependence>
        <text evidence="3">Optimum temperature is 25-28 degrees Celsius.</text>
    </temperatureDependence>
</comment>
<comment type="subunit">
    <text evidence="2">Homotetramer.</text>
</comment>
<comment type="similarity">
    <text evidence="5">Belongs to the short-chain dehydrogenases/reductases (SDR) family.</text>
</comment>
<gene>
    <name type="ordered locus">YALI0B16192g</name>
</gene>
<proteinExistence type="evidence at protein level"/>
<name>SDR_YARLI</name>